<dbReference type="EC" id="3.1.4.1" evidence="7"/>
<dbReference type="EC" id="3.6.1.-" evidence="1"/>
<dbReference type="EC" id="3.6.1.9" evidence="12 13"/>
<dbReference type="EMBL" id="AY630402">
    <property type="protein sequence ID" value="AAT64421.1"/>
    <property type="molecule type" value="mRNA"/>
</dbReference>
<dbReference type="EMBL" id="AC158616">
    <property type="status" value="NOT_ANNOTATED_CDS"/>
    <property type="molecule type" value="Genomic_DNA"/>
</dbReference>
<dbReference type="CCDS" id="CCDS23752.1"/>
<dbReference type="RefSeq" id="NP_598766.2">
    <property type="nucleotide sequence ID" value="NM_134005.2"/>
</dbReference>
<dbReference type="SMR" id="Q6DYE8"/>
<dbReference type="BioGRID" id="229091">
    <property type="interactions" value="1"/>
</dbReference>
<dbReference type="FunCoup" id="Q6DYE8">
    <property type="interactions" value="258"/>
</dbReference>
<dbReference type="STRING" id="10090.ENSMUSP00000020169"/>
<dbReference type="GlyCosmos" id="Q6DYE8">
    <property type="glycosylation" value="9 sites, No reported glycans"/>
</dbReference>
<dbReference type="GlyGen" id="Q6DYE8">
    <property type="glycosylation" value="9 sites, 5 N-linked glycans (5 sites)"/>
</dbReference>
<dbReference type="iPTMnet" id="Q6DYE8"/>
<dbReference type="PhosphoSitePlus" id="Q6DYE8"/>
<dbReference type="SwissPalm" id="Q6DYE8"/>
<dbReference type="jPOST" id="Q6DYE8"/>
<dbReference type="PaxDb" id="10090-ENSMUSP00000020169"/>
<dbReference type="PeptideAtlas" id="Q6DYE8"/>
<dbReference type="ProteomicsDB" id="275909"/>
<dbReference type="Pumba" id="Q6DYE8"/>
<dbReference type="Antibodypedia" id="32905">
    <property type="antibodies" value="491 antibodies from 37 providers"/>
</dbReference>
<dbReference type="DNASU" id="209558"/>
<dbReference type="Ensembl" id="ENSMUST00000020169.9">
    <property type="protein sequence ID" value="ENSMUSP00000020169.8"/>
    <property type="gene ID" value="ENSMUSG00000019989.9"/>
</dbReference>
<dbReference type="GeneID" id="209558"/>
<dbReference type="KEGG" id="mmu:209558"/>
<dbReference type="UCSC" id="uc007era.1">
    <property type="organism name" value="mouse"/>
</dbReference>
<dbReference type="AGR" id="MGI:2143702"/>
<dbReference type="CTD" id="5169"/>
<dbReference type="MGI" id="MGI:2143702">
    <property type="gene designation" value="Enpp3"/>
</dbReference>
<dbReference type="VEuPathDB" id="HostDB:ENSMUSG00000019989"/>
<dbReference type="eggNOG" id="KOG2645">
    <property type="taxonomic scope" value="Eukaryota"/>
</dbReference>
<dbReference type="GeneTree" id="ENSGT00940000159640"/>
<dbReference type="HOGENOM" id="CLU_012256_0_1_1"/>
<dbReference type="InParanoid" id="Q6DYE8"/>
<dbReference type="OMA" id="LFRCGER"/>
<dbReference type="OrthoDB" id="415411at2759"/>
<dbReference type="PhylomeDB" id="Q6DYE8"/>
<dbReference type="TreeFam" id="TF330032"/>
<dbReference type="BioGRID-ORCS" id="209558">
    <property type="hits" value="1 hit in 77 CRISPR screens"/>
</dbReference>
<dbReference type="ChiTaRS" id="Enpp3">
    <property type="organism name" value="mouse"/>
</dbReference>
<dbReference type="PRO" id="PR:Q6DYE8"/>
<dbReference type="Proteomes" id="UP000000589">
    <property type="component" value="Chromosome 10"/>
</dbReference>
<dbReference type="RNAct" id="Q6DYE8">
    <property type="molecule type" value="protein"/>
</dbReference>
<dbReference type="Bgee" id="ENSMUSG00000019989">
    <property type="expression patterns" value="Expressed in epithelium of small intestine and 178 other cell types or tissues"/>
</dbReference>
<dbReference type="ExpressionAtlas" id="Q6DYE8">
    <property type="expression patterns" value="baseline and differential"/>
</dbReference>
<dbReference type="GO" id="GO:0016324">
    <property type="term" value="C:apical plasma membrane"/>
    <property type="evidence" value="ECO:0007669"/>
    <property type="project" value="UniProtKB-SubCell"/>
</dbReference>
<dbReference type="GO" id="GO:0009897">
    <property type="term" value="C:external side of plasma membrane"/>
    <property type="evidence" value="ECO:0000314"/>
    <property type="project" value="UniProtKB"/>
</dbReference>
<dbReference type="GO" id="GO:0005576">
    <property type="term" value="C:extracellular region"/>
    <property type="evidence" value="ECO:0007669"/>
    <property type="project" value="UniProtKB-SubCell"/>
</dbReference>
<dbReference type="GO" id="GO:0048471">
    <property type="term" value="C:perinuclear region of cytoplasm"/>
    <property type="evidence" value="ECO:0007669"/>
    <property type="project" value="Ensembl"/>
</dbReference>
<dbReference type="GO" id="GO:0005524">
    <property type="term" value="F:ATP binding"/>
    <property type="evidence" value="ECO:0007669"/>
    <property type="project" value="UniProtKB-KW"/>
</dbReference>
<dbReference type="GO" id="GO:0047693">
    <property type="term" value="F:ATP diphosphatase activity"/>
    <property type="evidence" value="ECO:0007669"/>
    <property type="project" value="RHEA"/>
</dbReference>
<dbReference type="GO" id="GO:0034432">
    <property type="term" value="F:bis(5'-adenosyl)-pentaphosphatase activity"/>
    <property type="evidence" value="ECO:0000250"/>
    <property type="project" value="UniProtKB"/>
</dbReference>
<dbReference type="GO" id="GO:0047710">
    <property type="term" value="F:bis(5'-adenosyl)-triphosphatase activity"/>
    <property type="evidence" value="ECO:0000250"/>
    <property type="project" value="UniProtKB"/>
</dbReference>
<dbReference type="GO" id="GO:0004081">
    <property type="term" value="F:bis(5'-nucleosyl)-tetraphosphatase (asymmetrical) activity"/>
    <property type="evidence" value="ECO:0000250"/>
    <property type="project" value="UniProtKB"/>
</dbReference>
<dbReference type="GO" id="GO:0005509">
    <property type="term" value="F:calcium ion binding"/>
    <property type="evidence" value="ECO:0000250"/>
    <property type="project" value="UniProtKB"/>
</dbReference>
<dbReference type="GO" id="GO:0036219">
    <property type="term" value="F:GTP diphosphatase activity"/>
    <property type="evidence" value="ECO:0007669"/>
    <property type="project" value="RHEA"/>
</dbReference>
<dbReference type="GO" id="GO:0003676">
    <property type="term" value="F:nucleic acid binding"/>
    <property type="evidence" value="ECO:0007669"/>
    <property type="project" value="InterPro"/>
</dbReference>
<dbReference type="GO" id="GO:0047429">
    <property type="term" value="F:nucleoside triphosphate diphosphatase activity"/>
    <property type="evidence" value="ECO:0000315"/>
    <property type="project" value="UniProtKB"/>
</dbReference>
<dbReference type="GO" id="GO:0004528">
    <property type="term" value="F:phosphodiesterase I activity"/>
    <property type="evidence" value="ECO:0000250"/>
    <property type="project" value="UniProtKB"/>
</dbReference>
<dbReference type="GO" id="GO:0036221">
    <property type="term" value="F:UTP diphosphatase activity"/>
    <property type="evidence" value="ECO:0007669"/>
    <property type="project" value="RHEA"/>
</dbReference>
<dbReference type="GO" id="GO:0008270">
    <property type="term" value="F:zinc ion binding"/>
    <property type="evidence" value="ECO:0000250"/>
    <property type="project" value="UniProtKB"/>
</dbReference>
<dbReference type="GO" id="GO:0046034">
    <property type="term" value="P:ATP metabolic process"/>
    <property type="evidence" value="ECO:0000315"/>
    <property type="project" value="UniProtKB"/>
</dbReference>
<dbReference type="GO" id="GO:0002276">
    <property type="term" value="P:basophil activation involved in immune response"/>
    <property type="evidence" value="ECO:0000315"/>
    <property type="project" value="UniProtKB"/>
</dbReference>
<dbReference type="GO" id="GO:0050728">
    <property type="term" value="P:negative regulation of inflammatory response"/>
    <property type="evidence" value="ECO:0000315"/>
    <property type="project" value="UniProtKB"/>
</dbReference>
<dbReference type="GO" id="GO:0033007">
    <property type="term" value="P:negative regulation of mast cell activation involved in immune response"/>
    <property type="evidence" value="ECO:0000315"/>
    <property type="project" value="UniProtKB"/>
</dbReference>
<dbReference type="GO" id="GO:0070667">
    <property type="term" value="P:negative regulation of mast cell proliferation"/>
    <property type="evidence" value="ECO:0000315"/>
    <property type="project" value="UniProtKB"/>
</dbReference>
<dbReference type="GO" id="GO:0009143">
    <property type="term" value="P:nucleoside triphosphate catabolic process"/>
    <property type="evidence" value="ECO:0007669"/>
    <property type="project" value="Ensembl"/>
</dbReference>
<dbReference type="GO" id="GO:0055062">
    <property type="term" value="P:phosphate ion homeostasis"/>
    <property type="evidence" value="ECO:0000314"/>
    <property type="project" value="MGI"/>
</dbReference>
<dbReference type="GO" id="GO:0006220">
    <property type="term" value="P:pyrimidine nucleotide metabolic process"/>
    <property type="evidence" value="ECO:0000250"/>
    <property type="project" value="UniProtKB"/>
</dbReference>
<dbReference type="CDD" id="cd16018">
    <property type="entry name" value="Enpp"/>
    <property type="match status" value="1"/>
</dbReference>
<dbReference type="CDD" id="cd00091">
    <property type="entry name" value="NUC"/>
    <property type="match status" value="1"/>
</dbReference>
<dbReference type="FunFam" id="3.40.720.10:FF:000010">
    <property type="entry name" value="Ectonucleotide pyrophosphatase/phosphodiesterase family member 1"/>
    <property type="match status" value="1"/>
</dbReference>
<dbReference type="FunFam" id="4.10.410.20:FF:000001">
    <property type="entry name" value="Ectonucleotide pyrophosphatase/phosphodiesterase family member 2"/>
    <property type="match status" value="1"/>
</dbReference>
<dbReference type="FunFam" id="3.40.570.10:FF:000005">
    <property type="entry name" value="ectonucleotide pyrophosphatase/phosphodiesterase family member 3"/>
    <property type="match status" value="1"/>
</dbReference>
<dbReference type="FunFam" id="4.10.410.20:FF:000004">
    <property type="entry name" value="ectonucleotide pyrophosphatase/phosphodiesterase family member 3"/>
    <property type="match status" value="1"/>
</dbReference>
<dbReference type="Gene3D" id="4.10.410.20">
    <property type="match status" value="2"/>
</dbReference>
<dbReference type="Gene3D" id="3.40.720.10">
    <property type="entry name" value="Alkaline Phosphatase, subunit A"/>
    <property type="match status" value="1"/>
</dbReference>
<dbReference type="Gene3D" id="3.40.570.10">
    <property type="entry name" value="Extracellular Endonuclease, subunit A"/>
    <property type="match status" value="1"/>
</dbReference>
<dbReference type="InterPro" id="IPR017850">
    <property type="entry name" value="Alkaline_phosphatase_core_sf"/>
</dbReference>
<dbReference type="InterPro" id="IPR044929">
    <property type="entry name" value="DNA/RNA_non-sp_Endonuclease_sf"/>
</dbReference>
<dbReference type="InterPro" id="IPR001604">
    <property type="entry name" value="Endo_G_ENPP1-like_dom"/>
</dbReference>
<dbReference type="InterPro" id="IPR020821">
    <property type="entry name" value="ENPP1-3/EXOG-like_nuc-like"/>
</dbReference>
<dbReference type="InterPro" id="IPR044925">
    <property type="entry name" value="His-Me_finger_sf"/>
</dbReference>
<dbReference type="InterPro" id="IPR002591">
    <property type="entry name" value="Phosphodiest/P_Trfase"/>
</dbReference>
<dbReference type="InterPro" id="IPR036024">
    <property type="entry name" value="Somatomedin_B-like_dom_sf"/>
</dbReference>
<dbReference type="InterPro" id="IPR001212">
    <property type="entry name" value="Somatomedin_B_dom"/>
</dbReference>
<dbReference type="PANTHER" id="PTHR10151">
    <property type="entry name" value="ECTONUCLEOTIDE PYROPHOSPHATASE/PHOSPHODIESTERASE"/>
    <property type="match status" value="1"/>
</dbReference>
<dbReference type="PANTHER" id="PTHR10151:SF107">
    <property type="entry name" value="ECTONUCLEOTIDE PYROPHOSPHATASE_PHOSPHODIESTERASE FAMILY MEMBER 3"/>
    <property type="match status" value="1"/>
</dbReference>
<dbReference type="Pfam" id="PF01663">
    <property type="entry name" value="Phosphodiest"/>
    <property type="match status" value="1"/>
</dbReference>
<dbReference type="Pfam" id="PF01033">
    <property type="entry name" value="Somatomedin_B"/>
    <property type="match status" value="2"/>
</dbReference>
<dbReference type="SMART" id="SM00892">
    <property type="entry name" value="Endonuclease_NS"/>
    <property type="match status" value="1"/>
</dbReference>
<dbReference type="SMART" id="SM00477">
    <property type="entry name" value="NUC"/>
    <property type="match status" value="1"/>
</dbReference>
<dbReference type="SMART" id="SM00201">
    <property type="entry name" value="SO"/>
    <property type="match status" value="2"/>
</dbReference>
<dbReference type="SUPFAM" id="SSF53649">
    <property type="entry name" value="Alkaline phosphatase-like"/>
    <property type="match status" value="1"/>
</dbReference>
<dbReference type="SUPFAM" id="SSF54060">
    <property type="entry name" value="His-Me finger endonucleases"/>
    <property type="match status" value="1"/>
</dbReference>
<dbReference type="SUPFAM" id="SSF90188">
    <property type="entry name" value="Somatomedin B domain"/>
    <property type="match status" value="2"/>
</dbReference>
<dbReference type="PROSITE" id="PS00524">
    <property type="entry name" value="SMB_1"/>
    <property type="match status" value="2"/>
</dbReference>
<dbReference type="PROSITE" id="PS50958">
    <property type="entry name" value="SMB_2"/>
    <property type="match status" value="2"/>
</dbReference>
<gene>
    <name evidence="14" type="primary">Enpp3</name>
</gene>
<keyword id="KW-0067">ATP-binding</keyword>
<keyword id="KW-0106">Calcium</keyword>
<keyword id="KW-1003">Cell membrane</keyword>
<keyword id="KW-1015">Disulfide bond</keyword>
<keyword id="KW-0325">Glycoprotein</keyword>
<keyword id="KW-0378">Hydrolase</keyword>
<keyword id="KW-0472">Membrane</keyword>
<keyword id="KW-0479">Metal-binding</keyword>
<keyword id="KW-0511">Multifunctional enzyme</keyword>
<keyword id="KW-0547">Nucleotide-binding</keyword>
<keyword id="KW-1185">Reference proteome</keyword>
<keyword id="KW-0677">Repeat</keyword>
<keyword id="KW-0964">Secreted</keyword>
<keyword id="KW-0735">Signal-anchor</keyword>
<keyword id="KW-0812">Transmembrane</keyword>
<keyword id="KW-1133">Transmembrane helix</keyword>
<keyword id="KW-0862">Zinc</keyword>
<name>ENPP3_MOUSE</name>
<sequence length="874" mass="98662">MDSRLALATEEPIKKDSLKKYKILCVVLLALLVIVSLGLGLGLGLRKPEEQGSCRKKCFDSSHRGLEGCRCDSGCTGRGDCCWDFEDTCVKSTQIWTCNLFRCGENRLETALCSCADDCLQRKDCCADYKTVCQGESPWVTEACASSQEPQCPPGFDLPPVILFSMDGFRAEYLQTWSTLLPNINKLKTCGIHSKYMRAMYPTKTFPNHYTIVTGLYPESHGIIDNNMYDVHLNKNFSLSSVEKSNPAWWSGQPIWLTAMYQGLKAACYYWPGSDVAVNGSFPTIYRNYSNSVPYERRITTLLQWLDLPKADRPSFYTIYVEEPDSAGHSSGPVSAGVIKALQSVDNAFGMLMEGLKQRNLHNCVNIIVLADHGMDQTSCDRVEYMTDYFPKINFYMYQGPAPRIRTRNIPQDFFTFNSEEIVRNLSCRKPDQHFKPYLTPDLPKRLHYAKNVRIDKAHLMVDRQWLAFRSKGSSNCGGGTHGYNNEFKSMEAIFLAHGPSFIEKTVIEPFENIEVYNLLCDLLHIEPAPNNGTHGSLNHLLKTPFYKPSHAGELSTPADCGFTTPLPTDPLDCSCPALQNTPGLEEQANQRLNLSEGEVAATVKANLPFGRPRVMQKNGDHCLLYHRDYISGYGKAMKMPMWSSYTVLKPGDTSSLPPTVPDCLRADVRVAPSESQKCSFYLADKNITHGFLYPAIKGTNESRYDALITSNLVPMYKEFKKMWDYFHEVLLIKYAIERNGLNVVSGPIFDYNYDGHFDAPDEITQYVAGTDVPIPTHYFVVLTSCKDQTHTPDSCPGWLDVLPFIVPHRPTNIESCSENKTEDLWVEERFQAHAARVRDVELLTGLDFYQEKAQPVSQILQLKTYLPTFETII</sequence>
<reference key="1">
    <citation type="submission" date="2004-05" db="EMBL/GenBank/DDBJ databases">
        <title>Characterization of mouse ENPP3 (gp130RB13-6) as a lysophospholipase D.</title>
        <authorList>
            <person name="Lynch K.R."/>
            <person name="Lee S."/>
        </authorList>
    </citation>
    <scope>NUCLEOTIDE SEQUENCE [MRNA]</scope>
</reference>
<reference key="2">
    <citation type="journal article" date="2009" name="PLoS Biol.">
        <title>Lineage-specific biology revealed by a finished genome assembly of the mouse.</title>
        <authorList>
            <person name="Church D.M."/>
            <person name="Goodstadt L."/>
            <person name="Hillier L.W."/>
            <person name="Zody M.C."/>
            <person name="Goldstein S."/>
            <person name="She X."/>
            <person name="Bult C.J."/>
            <person name="Agarwala R."/>
            <person name="Cherry J.L."/>
            <person name="DiCuccio M."/>
            <person name="Hlavina W."/>
            <person name="Kapustin Y."/>
            <person name="Meric P."/>
            <person name="Maglott D."/>
            <person name="Birtle Z."/>
            <person name="Marques A.C."/>
            <person name="Graves T."/>
            <person name="Zhou S."/>
            <person name="Teague B."/>
            <person name="Potamousis K."/>
            <person name="Churas C."/>
            <person name="Place M."/>
            <person name="Herschleb J."/>
            <person name="Runnheim R."/>
            <person name="Forrest D."/>
            <person name="Amos-Landgraf J."/>
            <person name="Schwartz D.C."/>
            <person name="Cheng Z."/>
            <person name="Lindblad-Toh K."/>
            <person name="Eichler E.E."/>
            <person name="Ponting C.P."/>
        </authorList>
    </citation>
    <scope>NUCLEOTIDE SEQUENCE [LARGE SCALE GENOMIC DNA]</scope>
    <source>
        <strain>C57BL/6J</strain>
    </source>
</reference>
<reference key="3">
    <citation type="journal article" date="2009" name="Nat. Biotechnol.">
        <title>Mass-spectrometric identification and relative quantification of N-linked cell surface glycoproteins.</title>
        <authorList>
            <person name="Wollscheid B."/>
            <person name="Bausch-Fluck D."/>
            <person name="Henderson C."/>
            <person name="O'Brien R."/>
            <person name="Bibel M."/>
            <person name="Schiess R."/>
            <person name="Aebersold R."/>
            <person name="Watts J.D."/>
        </authorList>
    </citation>
    <scope>GLYCOSYLATION [LARGE SCALE ANALYSIS] AT ASN-594</scope>
</reference>
<reference key="4">
    <citation type="journal article" date="2010" name="Cell">
        <title>A tissue-specific atlas of mouse protein phosphorylation and expression.</title>
        <authorList>
            <person name="Huttlin E.L."/>
            <person name="Jedrychowski M.P."/>
            <person name="Elias J.E."/>
            <person name="Goswami T."/>
            <person name="Rad R."/>
            <person name="Beausoleil S.A."/>
            <person name="Villen J."/>
            <person name="Haas W."/>
            <person name="Sowa M.E."/>
            <person name="Gygi S.P."/>
        </authorList>
    </citation>
    <scope>IDENTIFICATION BY MASS SPECTROMETRY [LARGE SCALE ANALYSIS]</scope>
    <source>
        <tissue>Heart</tissue>
        <tissue>Kidney</tissue>
        <tissue>Liver</tissue>
        <tissue>Lung</tissue>
    </source>
</reference>
<reference key="5">
    <citation type="journal article" date="2013" name="J. Biol. Chem.">
        <title>Identification of ectonucleotide pyrophosphatase/phosphodiesterase 3 (ENPP3) as a regulator of N-acetylglucosaminyltransferase GnT-IX (GnT-Vb).</title>
        <authorList>
            <person name="Korekane H."/>
            <person name="Park J.Y."/>
            <person name="Matsumoto A."/>
            <person name="Nakajima K."/>
            <person name="Takamatsu S."/>
            <person name="Ohtsubo K."/>
            <person name="Miyamoto Y."/>
            <person name="Hanashima S."/>
            <person name="Kanekiyo K."/>
            <person name="Kitazume S."/>
            <person name="Yamaguchi Y."/>
            <person name="Matsuo I."/>
            <person name="Taniguchi N."/>
        </authorList>
    </citation>
    <scope>FUNCTION</scope>
    <scope>CATALYTIC ACTIVITY</scope>
    <scope>MUTAGENESIS OF THR-205</scope>
</reference>
<reference key="6">
    <citation type="journal article" date="2015" name="Immunity">
        <title>The ectoenzyme E-NPP3 negatively regulates ATP-dependent chronic allergic responses by basophils and mast cells.</title>
        <authorList>
            <person name="Tsai S.H."/>
            <person name="Kinoshita M."/>
            <person name="Kusu T."/>
            <person name="Kayama H."/>
            <person name="Okumura R."/>
            <person name="Ikeda K."/>
            <person name="Shimada Y."/>
            <person name="Takeda A."/>
            <person name="Yoshikawa S."/>
            <person name="Obata-Ninomiya K."/>
            <person name="Kurashima Y."/>
            <person name="Sato S."/>
            <person name="Umemoto E."/>
            <person name="Kiyono H."/>
            <person name="Karasuyama H."/>
            <person name="Takeda K."/>
        </authorList>
    </citation>
    <scope>FUNCTION</scope>
    <scope>CATALYTIC ACTIVITY</scope>
    <scope>INDUCTION BY ACTIVATION OF FC EPSILON RECEPTOR</scope>
    <scope>SUBCELLULAR LOCATION</scope>
    <scope>DISRUPTION PHENOTYPE</scope>
    <scope>TISSUE SPECIFICITY</scope>
</reference>
<reference key="7">
    <citation type="journal article" date="2017" name="PLoS ONE">
        <title>E-NPP3 controls plasmacytoid dendritic cell numbers in the small intestine.</title>
        <authorList>
            <person name="Furuta Y."/>
            <person name="Tsai S.H."/>
            <person name="Kinoshita M."/>
            <person name="Fujimoto K."/>
            <person name="Okumura R."/>
            <person name="Umemoto E."/>
            <person name="Kurashima Y."/>
            <person name="Kiyono H."/>
            <person name="Kayama H."/>
            <person name="Takeda K."/>
        </authorList>
    </citation>
    <scope>FUNCTION</scope>
    <scope>CATALYTIC ACTIVITY</scope>
    <scope>DISRUPTION PHENOTYPE</scope>
    <scope>TISSUE SPECIFICITY</scope>
</reference>
<organism>
    <name type="scientific">Mus musculus</name>
    <name type="common">Mouse</name>
    <dbReference type="NCBI Taxonomy" id="10090"/>
    <lineage>
        <taxon>Eukaryota</taxon>
        <taxon>Metazoa</taxon>
        <taxon>Chordata</taxon>
        <taxon>Craniata</taxon>
        <taxon>Vertebrata</taxon>
        <taxon>Euteleostomi</taxon>
        <taxon>Mammalia</taxon>
        <taxon>Eutheria</taxon>
        <taxon>Euarchontoglires</taxon>
        <taxon>Glires</taxon>
        <taxon>Rodentia</taxon>
        <taxon>Myomorpha</taxon>
        <taxon>Muroidea</taxon>
        <taxon>Muridae</taxon>
        <taxon>Murinae</taxon>
        <taxon>Mus</taxon>
        <taxon>Mus</taxon>
    </lineage>
</organism>
<accession>Q6DYE8</accession>
<accession>E9QMU8</accession>
<comment type="function">
    <text evidence="1 7 8 9">Hydrolase that metabolizes extracellular nucleotides, including ATP, GTP, UTP and CTP (By similarity). Limits mast cells and basophils response during inflammation and during the chronic phases of allergic responses by eliminating extracellular ATP, a signaling molecule activating these cells in an autocrine manner (PubMed:25692702). Metabolizes extracellular ATP in the lumen of the small intestine, and thereby prevents ATP-induced apoptosis of intestinal plasmacytoid dendritic cells (PubMed:28225814). Has a broad specificity and can also hydrolyze UDP-GlcNAc into UMP and GlcNAc-1-phosphate and potentially several other intracellular nucleotide sugars, including UDP-GalNAc, CMP-NeuAc, GDP-Fuc, and UDP-GlcA. Thereby, could modulate glycan biosynthesis and protein glycosylation (PubMed:23960081). Can hydrolyze extracellular dinucleoside polyphosphates, including the vasoactive adenosine polyphosphates as well. In addition, displays an alkaline phosphodiesterase activity in vitro (By similarity).</text>
</comment>
<comment type="catalytic activity">
    <reaction evidence="12 13">
        <text>a ribonucleoside 5'-triphosphate + H2O = a ribonucleoside 5'-phosphate + diphosphate + H(+)</text>
        <dbReference type="Rhea" id="RHEA:23996"/>
        <dbReference type="ChEBI" id="CHEBI:15377"/>
        <dbReference type="ChEBI" id="CHEBI:15378"/>
        <dbReference type="ChEBI" id="CHEBI:33019"/>
        <dbReference type="ChEBI" id="CHEBI:58043"/>
        <dbReference type="ChEBI" id="CHEBI:61557"/>
        <dbReference type="EC" id="3.6.1.9"/>
    </reaction>
    <physiologicalReaction direction="left-to-right" evidence="12 13">
        <dbReference type="Rhea" id="RHEA:23997"/>
    </physiologicalReaction>
</comment>
<comment type="catalytic activity">
    <reaction evidence="7">
        <text>UDP-N-acetyl-alpha-D-glucosamine + H2O = N-acetyl-alpha-D-glucosamine 1-phosphate + UMP + 2 H(+)</text>
        <dbReference type="Rhea" id="RHEA:29547"/>
        <dbReference type="ChEBI" id="CHEBI:15377"/>
        <dbReference type="ChEBI" id="CHEBI:15378"/>
        <dbReference type="ChEBI" id="CHEBI:57705"/>
        <dbReference type="ChEBI" id="CHEBI:57776"/>
        <dbReference type="ChEBI" id="CHEBI:57865"/>
    </reaction>
    <physiologicalReaction direction="left-to-right" evidence="11">
        <dbReference type="Rhea" id="RHEA:29548"/>
    </physiologicalReaction>
</comment>
<comment type="catalytic activity">
    <reaction evidence="1">
        <text>ATP + H2O = AMP + diphosphate + H(+)</text>
        <dbReference type="Rhea" id="RHEA:14245"/>
        <dbReference type="ChEBI" id="CHEBI:15377"/>
        <dbReference type="ChEBI" id="CHEBI:15378"/>
        <dbReference type="ChEBI" id="CHEBI:30616"/>
        <dbReference type="ChEBI" id="CHEBI:33019"/>
        <dbReference type="ChEBI" id="CHEBI:456215"/>
        <dbReference type="EC" id="3.6.1.9"/>
    </reaction>
    <physiologicalReaction direction="left-to-right" evidence="1">
        <dbReference type="Rhea" id="RHEA:14246"/>
    </physiologicalReaction>
</comment>
<comment type="catalytic activity">
    <reaction evidence="1">
        <text>CTP + H2O = CMP + diphosphate + H(+)</text>
        <dbReference type="Rhea" id="RHEA:27762"/>
        <dbReference type="ChEBI" id="CHEBI:15377"/>
        <dbReference type="ChEBI" id="CHEBI:15378"/>
        <dbReference type="ChEBI" id="CHEBI:33019"/>
        <dbReference type="ChEBI" id="CHEBI:37563"/>
        <dbReference type="ChEBI" id="CHEBI:60377"/>
        <dbReference type="EC" id="3.6.1.9"/>
    </reaction>
    <physiologicalReaction direction="left-to-right" evidence="1">
        <dbReference type="Rhea" id="RHEA:27763"/>
    </physiologicalReaction>
</comment>
<comment type="catalytic activity">
    <reaction evidence="1">
        <text>GTP + H2O = GMP + diphosphate + H(+)</text>
        <dbReference type="Rhea" id="RHEA:29391"/>
        <dbReference type="ChEBI" id="CHEBI:15377"/>
        <dbReference type="ChEBI" id="CHEBI:15378"/>
        <dbReference type="ChEBI" id="CHEBI:33019"/>
        <dbReference type="ChEBI" id="CHEBI:37565"/>
        <dbReference type="ChEBI" id="CHEBI:58115"/>
        <dbReference type="EC" id="3.6.1.9"/>
    </reaction>
    <physiologicalReaction direction="left-to-right" evidence="1">
        <dbReference type="Rhea" id="RHEA:29392"/>
    </physiologicalReaction>
</comment>
<comment type="catalytic activity">
    <reaction evidence="1">
        <text>UTP + H2O = UMP + diphosphate + H(+)</text>
        <dbReference type="Rhea" id="RHEA:29395"/>
        <dbReference type="ChEBI" id="CHEBI:15377"/>
        <dbReference type="ChEBI" id="CHEBI:15378"/>
        <dbReference type="ChEBI" id="CHEBI:33019"/>
        <dbReference type="ChEBI" id="CHEBI:46398"/>
        <dbReference type="ChEBI" id="CHEBI:57865"/>
        <dbReference type="EC" id="3.6.1.9"/>
    </reaction>
    <physiologicalReaction direction="left-to-right" evidence="1">
        <dbReference type="Rhea" id="RHEA:29396"/>
    </physiologicalReaction>
</comment>
<comment type="catalytic activity">
    <reaction evidence="7">
        <text>Hydrolytically removes 5'-nucleotides successively from the 3'-hydroxy termini of 3'-hydroxy-terminated oligonucleotides.</text>
        <dbReference type="EC" id="3.1.4.1"/>
    </reaction>
</comment>
<comment type="catalytic activity">
    <reaction evidence="1">
        <text>P(1),P(3)-bis(5'-adenosyl) triphosphate + H2O = AMP + ADP + 2 H(+)</text>
        <dbReference type="Rhea" id="RHEA:13893"/>
        <dbReference type="ChEBI" id="CHEBI:15377"/>
        <dbReference type="ChEBI" id="CHEBI:15378"/>
        <dbReference type="ChEBI" id="CHEBI:58529"/>
        <dbReference type="ChEBI" id="CHEBI:456215"/>
        <dbReference type="ChEBI" id="CHEBI:456216"/>
    </reaction>
    <physiologicalReaction direction="left-to-right" evidence="1">
        <dbReference type="Rhea" id="RHEA:13894"/>
    </physiologicalReaction>
</comment>
<comment type="catalytic activity">
    <reaction evidence="1">
        <text>P(1),P(4)-bis(5'-adenosyl) tetraphosphate + H2O = AMP + ATP + 2 H(+)</text>
        <dbReference type="Rhea" id="RHEA:32039"/>
        <dbReference type="ChEBI" id="CHEBI:15377"/>
        <dbReference type="ChEBI" id="CHEBI:15378"/>
        <dbReference type="ChEBI" id="CHEBI:30616"/>
        <dbReference type="ChEBI" id="CHEBI:58141"/>
        <dbReference type="ChEBI" id="CHEBI:456215"/>
    </reaction>
    <physiologicalReaction direction="left-to-right" evidence="1">
        <dbReference type="Rhea" id="RHEA:32040"/>
    </physiologicalReaction>
</comment>
<comment type="catalytic activity">
    <reaction evidence="1">
        <text>P(1),P(5)-bis(5'-adenosyl) pentaphosphate + H2O = adenosine 5'-tetraphosphate + AMP + 2 H(+)</text>
        <dbReference type="Rhea" id="RHEA:32051"/>
        <dbReference type="ChEBI" id="CHEBI:15377"/>
        <dbReference type="ChEBI" id="CHEBI:15378"/>
        <dbReference type="ChEBI" id="CHEBI:58450"/>
        <dbReference type="ChEBI" id="CHEBI:62041"/>
        <dbReference type="ChEBI" id="CHEBI:456215"/>
    </reaction>
    <physiologicalReaction direction="left-to-right" evidence="1">
        <dbReference type="Rhea" id="RHEA:32052"/>
    </physiologicalReaction>
</comment>
<comment type="catalytic activity">
    <reaction evidence="1">
        <text>P(1),P(4)-bis(5'-guanosyl) tetraphosphate + H2O = GMP + GTP + 2 H(+)</text>
        <dbReference type="Rhea" id="RHEA:22484"/>
        <dbReference type="ChEBI" id="CHEBI:15377"/>
        <dbReference type="ChEBI" id="CHEBI:15378"/>
        <dbReference type="ChEBI" id="CHEBI:37565"/>
        <dbReference type="ChEBI" id="CHEBI:57553"/>
        <dbReference type="ChEBI" id="CHEBI:58115"/>
    </reaction>
</comment>
<comment type="cofactor">
    <cofactor evidence="1">
        <name>Zn(2+)</name>
        <dbReference type="ChEBI" id="CHEBI:29105"/>
    </cofactor>
    <text evidence="1">Binds 2 zinc ions per subunit.</text>
</comment>
<comment type="subunit">
    <text evidence="1">Monomer and homodimer.</text>
</comment>
<comment type="subcellular location">
    <subcellularLocation>
        <location evidence="8">Cell membrane</location>
        <topology evidence="1">Single-pass type II membrane protein</topology>
    </subcellularLocation>
    <subcellularLocation>
        <location evidence="1">Apical cell membrane</location>
        <topology evidence="1">Single-pass type II membrane protein</topology>
    </subcellularLocation>
    <subcellularLocation>
        <location evidence="1">Secreted</location>
    </subcellularLocation>
    <text evidence="1 8">Detected at the cell surface of basophils (PubMed:25692702). Detected at the apical plasma membrane of bile duct cells. Located to the apical surface in intestinal and kidney epithelial cells. Secreted in serum, and in lumen of epithelial cells (By similarity).</text>
</comment>
<comment type="tissue specificity">
    <text evidence="8 9">Detected at the tip of villi in the small intestine (PubMed:28225814). Detected on basophils and mast cells (at protein level) (PubMed:25692702). Detected in the epithelial layer of the small intestine; expression is higher in the proximal part and lower in the distal part of the small intestine (PubMed:28225814).</text>
</comment>
<comment type="induction">
    <text evidence="8">In bone marrow-derived mast cells and basophils, induced by activation of the high affinity immunoglobulin epsilon receptor 1 (Fc epsilon RI).</text>
</comment>
<comment type="PTM">
    <text evidence="3">N-glycosylated. N-glycosylation is necessary for normal transport to the cell membrane, but is not the apical targeting signal.</text>
</comment>
<comment type="disruption phenotype">
    <text evidence="8 9">Mice appear healthy, and have normal numbers of peripheral lymphocytes, eosinophils and neutrophils. Basophil numbers are normal in bone marrow, but are markedly increased in peripheral blood and spleen. Likewise, mutant mice have an increased number of mast cells in the small and large intestine. Both mast cells and basophils show increased proliferation in response to extracellular ATP. Mutant mice display normal immediate reaction to allergens, but strongly increased chronic allergic inflammation in skin, intestine and lung that lead to severe tissue damage. Extracellular ATP levels are normal in the absence of allergen, and strongly increased after exposure to allergen, due to impaired clearance of extracellular ATP (PubMed:25692702). Mutant mice display increased levels of extracellular ATP in the lumen of the small intestine. They have decreased numbers of plasmacytoid dendritic cells in the small intestine lamia propria and in Peyer patches; the decrease is due to increased ATP levels that cause increased apoptosis of plasmacytoid dendritic cells (PubMed:28225814).</text>
</comment>
<evidence type="ECO:0000250" key="1">
    <source>
        <dbReference type="UniProtKB" id="O14638"/>
    </source>
</evidence>
<evidence type="ECO:0000250" key="2">
    <source>
        <dbReference type="UniProtKB" id="P15396"/>
    </source>
</evidence>
<evidence type="ECO:0000250" key="3">
    <source>
        <dbReference type="UniProtKB" id="P97675"/>
    </source>
</evidence>
<evidence type="ECO:0000255" key="4"/>
<evidence type="ECO:0000255" key="5">
    <source>
        <dbReference type="PROSITE-ProRule" id="PRU00350"/>
    </source>
</evidence>
<evidence type="ECO:0000269" key="6">
    <source>
    </source>
</evidence>
<evidence type="ECO:0000269" key="7">
    <source>
    </source>
</evidence>
<evidence type="ECO:0000269" key="8">
    <source>
    </source>
</evidence>
<evidence type="ECO:0000269" key="9">
    <source>
    </source>
</evidence>
<evidence type="ECO:0000305" key="10"/>
<evidence type="ECO:0000305" key="11">
    <source>
    </source>
</evidence>
<evidence type="ECO:0000305" key="12">
    <source>
    </source>
</evidence>
<evidence type="ECO:0000305" key="13">
    <source>
    </source>
</evidence>
<evidence type="ECO:0000312" key="14">
    <source>
        <dbReference type="MGI" id="MGI:2143702"/>
    </source>
</evidence>
<feature type="chain" id="PRO_0000281652" description="Ectonucleotide pyrophosphatase/phosphodiesterase family member 3">
    <location>
        <begin position="1"/>
        <end position="874"/>
    </location>
</feature>
<feature type="topological domain" description="Cytoplasmic" evidence="4">
    <location>
        <begin position="1"/>
        <end position="11"/>
    </location>
</feature>
<feature type="transmembrane region" description="Helical; Signal-anchor for type II membrane protein" evidence="4">
    <location>
        <begin position="12"/>
        <end position="30"/>
    </location>
</feature>
<feature type="topological domain" description="Extracellular" evidence="4">
    <location>
        <begin position="31"/>
        <end position="874"/>
    </location>
</feature>
<feature type="domain" description="SMB 1" evidence="5">
    <location>
        <begin position="51"/>
        <end position="93"/>
    </location>
</feature>
<feature type="domain" description="SMB 2" evidence="5">
    <location>
        <begin position="94"/>
        <end position="138"/>
    </location>
</feature>
<feature type="region of interest" description="Phosphodiesterase" evidence="1">
    <location>
        <begin position="160"/>
        <end position="544"/>
    </location>
</feature>
<feature type="region of interest" description="Nuclease" evidence="1">
    <location>
        <begin position="581"/>
        <end position="874"/>
    </location>
</feature>
<feature type="short sequence motif" description="Cell attachment site" evidence="4">
    <location>
        <begin position="78"/>
        <end position="80"/>
    </location>
</feature>
<feature type="active site" description="Nucleophile" evidence="2">
    <location>
        <position position="205"/>
    </location>
</feature>
<feature type="binding site" evidence="1">
    <location>
        <position position="167"/>
    </location>
    <ligand>
        <name>Zn(2+)</name>
        <dbReference type="ChEBI" id="CHEBI:29105"/>
        <label>1</label>
        <note>catalytic</note>
    </ligand>
</feature>
<feature type="binding site" evidence="1">
    <location>
        <position position="204"/>
    </location>
    <ligand>
        <name>ATP</name>
        <dbReference type="ChEBI" id="CHEBI:30616"/>
    </ligand>
</feature>
<feature type="binding site" evidence="1">
    <location>
        <position position="205"/>
    </location>
    <ligand>
        <name>Zn(2+)</name>
        <dbReference type="ChEBI" id="CHEBI:29105"/>
        <label>1</label>
        <note>catalytic</note>
    </ligand>
</feature>
<feature type="binding site" evidence="1">
    <location>
        <position position="226"/>
    </location>
    <ligand>
        <name>ATP</name>
        <dbReference type="ChEBI" id="CHEBI:30616"/>
    </ligand>
</feature>
<feature type="binding site" evidence="1">
    <location>
        <position position="275"/>
    </location>
    <ligand>
        <name>ATP</name>
        <dbReference type="ChEBI" id="CHEBI:30616"/>
    </ligand>
</feature>
<feature type="binding site" evidence="1">
    <location>
        <position position="289"/>
    </location>
    <ligand>
        <name>ATP</name>
        <dbReference type="ChEBI" id="CHEBI:30616"/>
    </ligand>
</feature>
<feature type="binding site" evidence="1">
    <location>
        <position position="325"/>
    </location>
    <ligand>
        <name>Zn(2+)</name>
        <dbReference type="ChEBI" id="CHEBI:29105"/>
        <label>2</label>
        <note>catalytic</note>
    </ligand>
</feature>
<feature type="binding site" evidence="1">
    <location>
        <position position="329"/>
    </location>
    <ligand>
        <name>Zn(2+)</name>
        <dbReference type="ChEBI" id="CHEBI:29105"/>
        <label>2</label>
        <note>catalytic</note>
    </ligand>
</feature>
<feature type="binding site" evidence="1">
    <location>
        <position position="372"/>
    </location>
    <ligand>
        <name>Zn(2+)</name>
        <dbReference type="ChEBI" id="CHEBI:29105"/>
        <label>1</label>
        <note>catalytic</note>
    </ligand>
</feature>
<feature type="binding site" evidence="1">
    <location>
        <position position="373"/>
    </location>
    <ligand>
        <name>Zn(2+)</name>
        <dbReference type="ChEBI" id="CHEBI:29105"/>
        <label>1</label>
        <note>catalytic</note>
    </ligand>
</feature>
<feature type="binding site" evidence="1">
    <location>
        <position position="482"/>
    </location>
    <ligand>
        <name>Zn(2+)</name>
        <dbReference type="ChEBI" id="CHEBI:29105"/>
        <label>2</label>
        <note>catalytic</note>
    </ligand>
</feature>
<feature type="binding site" evidence="1">
    <location>
        <position position="751"/>
    </location>
    <ligand>
        <name>Ca(2+)</name>
        <dbReference type="ChEBI" id="CHEBI:29108"/>
    </ligand>
</feature>
<feature type="binding site" evidence="1">
    <location>
        <position position="753"/>
    </location>
    <ligand>
        <name>Ca(2+)</name>
        <dbReference type="ChEBI" id="CHEBI:29108"/>
    </ligand>
</feature>
<feature type="binding site" evidence="1">
    <location>
        <position position="755"/>
    </location>
    <ligand>
        <name>Ca(2+)</name>
        <dbReference type="ChEBI" id="CHEBI:29108"/>
    </ligand>
</feature>
<feature type="binding site" evidence="1">
    <location>
        <position position="757"/>
    </location>
    <ligand>
        <name>Ca(2+)</name>
        <dbReference type="ChEBI" id="CHEBI:29108"/>
    </ligand>
</feature>
<feature type="binding site" evidence="1">
    <location>
        <position position="759"/>
    </location>
    <ligand>
        <name>Ca(2+)</name>
        <dbReference type="ChEBI" id="CHEBI:29108"/>
    </ligand>
</feature>
<feature type="glycosylation site" description="N-linked (GlcNAc...) asparagine" evidence="4">
    <location>
        <position position="236"/>
    </location>
</feature>
<feature type="glycosylation site" description="N-linked (GlcNAc...) asparagine" evidence="4">
    <location>
        <position position="279"/>
    </location>
</feature>
<feature type="glycosylation site" description="N-linked (GlcNAc...) asparagine" evidence="4">
    <location>
        <position position="288"/>
    </location>
</feature>
<feature type="glycosylation site" description="N-linked (GlcNAc...) asparagine" evidence="4">
    <location>
        <position position="425"/>
    </location>
</feature>
<feature type="glycosylation site" description="N-linked (GlcNAc...) asparagine" evidence="4">
    <location>
        <position position="532"/>
    </location>
</feature>
<feature type="glycosylation site" description="N-linked (GlcNAc...) asparagine" evidence="6">
    <location>
        <position position="594"/>
    </location>
</feature>
<feature type="glycosylation site" description="N-linked (GlcNAc...) asparagine" evidence="4">
    <location>
        <position position="687"/>
    </location>
</feature>
<feature type="glycosylation site" description="N-linked (GlcNAc...) asparagine" evidence="4">
    <location>
        <position position="701"/>
    </location>
</feature>
<feature type="glycosylation site" description="N-linked (GlcNAc...) asparagine" evidence="4">
    <location>
        <position position="820"/>
    </location>
</feature>
<feature type="disulfide bond" evidence="5">
    <location>
        <begin position="54"/>
        <end position="71"/>
    </location>
</feature>
<feature type="disulfide bond" evidence="5">
    <location>
        <begin position="54"/>
        <end position="58"/>
    </location>
</feature>
<feature type="disulfide bond" evidence="5">
    <location>
        <begin position="58"/>
        <end position="89"/>
    </location>
</feature>
<feature type="disulfide bond" evidence="5">
    <location>
        <begin position="69"/>
        <end position="82"/>
    </location>
</feature>
<feature type="disulfide bond" evidence="5">
    <location>
        <begin position="69"/>
        <end position="71"/>
    </location>
</feature>
<feature type="disulfide bond" evidence="5">
    <location>
        <begin position="75"/>
        <end position="81"/>
    </location>
</feature>
<feature type="disulfide bond" evidence="5">
    <location>
        <begin position="82"/>
        <end position="89"/>
    </location>
</feature>
<feature type="disulfide bond" evidence="1">
    <location>
        <begin position="98"/>
        <end position="115"/>
    </location>
</feature>
<feature type="disulfide bond" evidence="1">
    <location>
        <begin position="103"/>
        <end position="133"/>
    </location>
</feature>
<feature type="disulfide bond" evidence="1">
    <location>
        <begin position="113"/>
        <end position="126"/>
    </location>
</feature>
<feature type="disulfide bond" evidence="1">
    <location>
        <begin position="119"/>
        <end position="125"/>
    </location>
</feature>
<feature type="disulfide bond" evidence="1">
    <location>
        <begin position="144"/>
        <end position="190"/>
    </location>
</feature>
<feature type="disulfide bond" evidence="1">
    <location>
        <begin position="152"/>
        <end position="364"/>
    </location>
</feature>
<feature type="disulfide bond" evidence="1">
    <location>
        <begin position="380"/>
        <end position="477"/>
    </location>
</feature>
<feature type="disulfide bond" evidence="1">
    <location>
        <begin position="428"/>
        <end position="817"/>
    </location>
</feature>
<feature type="disulfide bond" evidence="1">
    <location>
        <begin position="561"/>
        <end position="623"/>
    </location>
</feature>
<feature type="disulfide bond" evidence="1">
    <location>
        <begin position="574"/>
        <end position="679"/>
    </location>
</feature>
<feature type="disulfide bond" evidence="1">
    <location>
        <begin position="576"/>
        <end position="664"/>
    </location>
</feature>
<feature type="disulfide bond" evidence="1">
    <location>
        <begin position="786"/>
        <end position="796"/>
    </location>
</feature>
<feature type="mutagenesis site" description="Loss of phosphodiesterase I activity. Loss of UDP-N-acetyl-alpha-D-glucosamine activity." evidence="7">
    <original>T</original>
    <variation>A</variation>
    <location>
        <position position="205"/>
    </location>
</feature>
<feature type="sequence conflict" description="In Ref. 1; AAT64421." evidence="10" ref="1">
    <original>I</original>
    <variation>S</variation>
    <location>
        <position position="212"/>
    </location>
</feature>
<feature type="sequence conflict" description="In Ref. 1; AAT64421." evidence="10" ref="1">
    <original>D</original>
    <variation>V</variation>
    <location>
        <position position="560"/>
    </location>
</feature>
<feature type="sequence conflict" description="In Ref. 1; AAT64421." evidence="10" ref="1">
    <original>A</original>
    <variation>V</variation>
    <location>
        <position position="835"/>
    </location>
</feature>
<proteinExistence type="evidence at protein level"/>
<protein>
    <recommendedName>
        <fullName evidence="11 12">Ectonucleotide pyrophosphatase/phosphodiesterase family member 3</fullName>
        <shortName>E-NPP 3</shortName>
    </recommendedName>
    <alternativeName>
        <fullName>Alkaline phosphodiesterase I</fullName>
        <ecNumber evidence="7">3.1.4.1</ecNumber>
    </alternativeName>
    <alternativeName>
        <fullName evidence="1">Dinucleoside polyphosphatase</fullName>
        <ecNumber evidence="1">3.6.1.-</ecNumber>
    </alternativeName>
    <alternativeName>
        <fullName evidence="10">Nucleotide diphosphatase</fullName>
    </alternativeName>
    <alternativeName>
        <fullName evidence="12 13">Nucleotide pyrophosphatase</fullName>
        <shortName>NPPase</shortName>
        <ecNumber evidence="12 13">3.6.1.9</ecNumber>
    </alternativeName>
    <alternativeName>
        <fullName>Phosphodiesterase I beta</fullName>
        <shortName>PD-Ibeta</shortName>
    </alternativeName>
    <alternativeName>
        <fullName>Phosphodiesterase I/nucleotide pyrophosphatase 3</fullName>
    </alternativeName>
    <cdAntigenName>CD203c</cdAntigenName>
</protein>